<evidence type="ECO:0000255" key="1">
    <source>
        <dbReference type="HAMAP-Rule" id="MF_01825"/>
    </source>
</evidence>
<name>PDXB_ECO81</name>
<gene>
    <name evidence="1" type="primary">pdxB</name>
    <name type="ordered locus">ECED1_2784</name>
</gene>
<organism>
    <name type="scientific">Escherichia coli O81 (strain ED1a)</name>
    <dbReference type="NCBI Taxonomy" id="585397"/>
    <lineage>
        <taxon>Bacteria</taxon>
        <taxon>Pseudomonadati</taxon>
        <taxon>Pseudomonadota</taxon>
        <taxon>Gammaproteobacteria</taxon>
        <taxon>Enterobacterales</taxon>
        <taxon>Enterobacteriaceae</taxon>
        <taxon>Escherichia</taxon>
    </lineage>
</organism>
<accession>B7MXZ7</accession>
<reference key="1">
    <citation type="journal article" date="2009" name="PLoS Genet.">
        <title>Organised genome dynamics in the Escherichia coli species results in highly diverse adaptive paths.</title>
        <authorList>
            <person name="Touchon M."/>
            <person name="Hoede C."/>
            <person name="Tenaillon O."/>
            <person name="Barbe V."/>
            <person name="Baeriswyl S."/>
            <person name="Bidet P."/>
            <person name="Bingen E."/>
            <person name="Bonacorsi S."/>
            <person name="Bouchier C."/>
            <person name="Bouvet O."/>
            <person name="Calteau A."/>
            <person name="Chiapello H."/>
            <person name="Clermont O."/>
            <person name="Cruveiller S."/>
            <person name="Danchin A."/>
            <person name="Diard M."/>
            <person name="Dossat C."/>
            <person name="Karoui M.E."/>
            <person name="Frapy E."/>
            <person name="Garry L."/>
            <person name="Ghigo J.M."/>
            <person name="Gilles A.M."/>
            <person name="Johnson J."/>
            <person name="Le Bouguenec C."/>
            <person name="Lescat M."/>
            <person name="Mangenot S."/>
            <person name="Martinez-Jehanne V."/>
            <person name="Matic I."/>
            <person name="Nassif X."/>
            <person name="Oztas S."/>
            <person name="Petit M.A."/>
            <person name="Pichon C."/>
            <person name="Rouy Z."/>
            <person name="Ruf C.S."/>
            <person name="Schneider D."/>
            <person name="Tourret J."/>
            <person name="Vacherie B."/>
            <person name="Vallenet D."/>
            <person name="Medigue C."/>
            <person name="Rocha E.P.C."/>
            <person name="Denamur E."/>
        </authorList>
    </citation>
    <scope>NUCLEOTIDE SEQUENCE [LARGE SCALE GENOMIC DNA]</scope>
    <source>
        <strain>ED1a</strain>
    </source>
</reference>
<comment type="function">
    <text evidence="1">Catalyzes the oxidation of erythronate-4-phosphate to 3-hydroxy-2-oxo-4-phosphonooxybutanoate.</text>
</comment>
<comment type="catalytic activity">
    <reaction evidence="1">
        <text>4-phospho-D-erythronate + NAD(+) = (R)-3-hydroxy-2-oxo-4-phosphooxybutanoate + NADH + H(+)</text>
        <dbReference type="Rhea" id="RHEA:18829"/>
        <dbReference type="ChEBI" id="CHEBI:15378"/>
        <dbReference type="ChEBI" id="CHEBI:57540"/>
        <dbReference type="ChEBI" id="CHEBI:57945"/>
        <dbReference type="ChEBI" id="CHEBI:58538"/>
        <dbReference type="ChEBI" id="CHEBI:58766"/>
        <dbReference type="EC" id="1.1.1.290"/>
    </reaction>
</comment>
<comment type="pathway">
    <text evidence="1">Cofactor biosynthesis; pyridoxine 5'-phosphate biosynthesis; pyridoxine 5'-phosphate from D-erythrose 4-phosphate: step 2/5.</text>
</comment>
<comment type="subunit">
    <text evidence="1">Homodimer.</text>
</comment>
<comment type="subcellular location">
    <subcellularLocation>
        <location evidence="1">Cytoplasm</location>
    </subcellularLocation>
</comment>
<comment type="similarity">
    <text evidence="1">Belongs to the D-isomer specific 2-hydroxyacid dehydrogenase family. PdxB subfamily.</text>
</comment>
<dbReference type="EC" id="1.1.1.290" evidence="1"/>
<dbReference type="EMBL" id="CU928162">
    <property type="protein sequence ID" value="CAR08963.2"/>
    <property type="molecule type" value="Genomic_DNA"/>
</dbReference>
<dbReference type="RefSeq" id="WP_000699142.1">
    <property type="nucleotide sequence ID" value="NC_011745.1"/>
</dbReference>
<dbReference type="SMR" id="B7MXZ7"/>
<dbReference type="KEGG" id="ecq:ECED1_2784"/>
<dbReference type="HOGENOM" id="CLU_019796_4_0_6"/>
<dbReference type="UniPathway" id="UPA00244">
    <property type="reaction ID" value="UER00310"/>
</dbReference>
<dbReference type="Proteomes" id="UP000000748">
    <property type="component" value="Chromosome"/>
</dbReference>
<dbReference type="GO" id="GO:0005829">
    <property type="term" value="C:cytosol"/>
    <property type="evidence" value="ECO:0007669"/>
    <property type="project" value="UniProtKB-ARBA"/>
</dbReference>
<dbReference type="GO" id="GO:0033711">
    <property type="term" value="F:4-phosphoerythronate dehydrogenase activity"/>
    <property type="evidence" value="ECO:0007669"/>
    <property type="project" value="UniProtKB-EC"/>
</dbReference>
<dbReference type="GO" id="GO:0051287">
    <property type="term" value="F:NAD binding"/>
    <property type="evidence" value="ECO:0007669"/>
    <property type="project" value="InterPro"/>
</dbReference>
<dbReference type="GO" id="GO:0046983">
    <property type="term" value="F:protein dimerization activity"/>
    <property type="evidence" value="ECO:0007669"/>
    <property type="project" value="InterPro"/>
</dbReference>
<dbReference type="GO" id="GO:0036001">
    <property type="term" value="P:'de novo' pyridoxal 5'-phosphate biosynthetic process"/>
    <property type="evidence" value="ECO:0007669"/>
    <property type="project" value="TreeGrafter"/>
</dbReference>
<dbReference type="GO" id="GO:0008615">
    <property type="term" value="P:pyridoxine biosynthetic process"/>
    <property type="evidence" value="ECO:0007669"/>
    <property type="project" value="UniProtKB-UniRule"/>
</dbReference>
<dbReference type="CDD" id="cd12158">
    <property type="entry name" value="ErythrP_dh"/>
    <property type="match status" value="1"/>
</dbReference>
<dbReference type="FunFam" id="3.30.1370.170:FF:000001">
    <property type="entry name" value="Erythronate-4-phosphate dehydrogenase"/>
    <property type="match status" value="1"/>
</dbReference>
<dbReference type="FunFam" id="3.40.50.720:FF:000093">
    <property type="entry name" value="Erythronate-4-phosphate dehydrogenase"/>
    <property type="match status" value="1"/>
</dbReference>
<dbReference type="Gene3D" id="3.30.1370.170">
    <property type="match status" value="1"/>
</dbReference>
<dbReference type="Gene3D" id="3.40.50.720">
    <property type="entry name" value="NAD(P)-binding Rossmann-like Domain"/>
    <property type="match status" value="2"/>
</dbReference>
<dbReference type="HAMAP" id="MF_01825">
    <property type="entry name" value="PdxB"/>
    <property type="match status" value="1"/>
</dbReference>
<dbReference type="InterPro" id="IPR006139">
    <property type="entry name" value="D-isomer_2_OHA_DH_cat_dom"/>
</dbReference>
<dbReference type="InterPro" id="IPR029753">
    <property type="entry name" value="D-isomer_DH_CS"/>
</dbReference>
<dbReference type="InterPro" id="IPR029752">
    <property type="entry name" value="D-isomer_DH_CS1"/>
</dbReference>
<dbReference type="InterPro" id="IPR006140">
    <property type="entry name" value="D-isomer_DH_NAD-bd"/>
</dbReference>
<dbReference type="InterPro" id="IPR020921">
    <property type="entry name" value="Erythronate-4-P_DHase"/>
</dbReference>
<dbReference type="InterPro" id="IPR024531">
    <property type="entry name" value="Erythronate-4-P_DHase_dimer"/>
</dbReference>
<dbReference type="InterPro" id="IPR036291">
    <property type="entry name" value="NAD(P)-bd_dom_sf"/>
</dbReference>
<dbReference type="InterPro" id="IPR038251">
    <property type="entry name" value="PdxB_dimer_sf"/>
</dbReference>
<dbReference type="NCBIfam" id="NF001309">
    <property type="entry name" value="PRK00257.1"/>
    <property type="match status" value="1"/>
</dbReference>
<dbReference type="NCBIfam" id="NF011966">
    <property type="entry name" value="PRK15438.1"/>
    <property type="match status" value="1"/>
</dbReference>
<dbReference type="PANTHER" id="PTHR42938">
    <property type="entry name" value="FORMATE DEHYDROGENASE 1"/>
    <property type="match status" value="1"/>
</dbReference>
<dbReference type="PANTHER" id="PTHR42938:SF9">
    <property type="entry name" value="FORMATE DEHYDROGENASE 1"/>
    <property type="match status" value="1"/>
</dbReference>
<dbReference type="Pfam" id="PF00389">
    <property type="entry name" value="2-Hacid_dh"/>
    <property type="match status" value="1"/>
</dbReference>
<dbReference type="Pfam" id="PF02826">
    <property type="entry name" value="2-Hacid_dh_C"/>
    <property type="match status" value="1"/>
</dbReference>
<dbReference type="Pfam" id="PF11890">
    <property type="entry name" value="DUF3410"/>
    <property type="match status" value="1"/>
</dbReference>
<dbReference type="SUPFAM" id="SSF52283">
    <property type="entry name" value="Formate/glycerate dehydrogenase catalytic domain-like"/>
    <property type="match status" value="1"/>
</dbReference>
<dbReference type="SUPFAM" id="SSF51735">
    <property type="entry name" value="NAD(P)-binding Rossmann-fold domains"/>
    <property type="match status" value="1"/>
</dbReference>
<dbReference type="PROSITE" id="PS00065">
    <property type="entry name" value="D_2_HYDROXYACID_DH_1"/>
    <property type="match status" value="1"/>
</dbReference>
<dbReference type="PROSITE" id="PS00671">
    <property type="entry name" value="D_2_HYDROXYACID_DH_3"/>
    <property type="match status" value="1"/>
</dbReference>
<sequence length="378" mass="41291">MKILVDENMPYARDLFSRLGEVTAVPGRPIPVAQLADADALMVRSVTKVNESLLAGKPIKFVGTATAGTDHVDEAWLKQAGIGFSAAPGCNAIAVVEYVFSSLLMLAERDGFSLHERTVGIVGVGNVGRRLQARLEALGITTLLCDPPRADRGDEGDFRSLNELAQHADILTFHTPLFKDGPYKTLHLADEKLIRSLKPGAILINACRGAVVDNTALLTCLNEGQKLSVVLDVWEGEPELNVELLKKVDIGTPHIAGYTLEGKARGTTQVFEAYSKFIGHEQHVALDTLLPAPEFGRITLHGPLDQPTLKRLVHLVYDVRRDDAPLRKVAGIPGEFDKLRKNYLERREWSSLYVICDDASAASLLCKLGFNAVHHPAR</sequence>
<keyword id="KW-0963">Cytoplasm</keyword>
<keyword id="KW-0520">NAD</keyword>
<keyword id="KW-0560">Oxidoreductase</keyword>
<keyword id="KW-0664">Pyridoxine biosynthesis</keyword>
<feature type="chain" id="PRO_1000188263" description="Erythronate-4-phosphate dehydrogenase">
    <location>
        <begin position="1"/>
        <end position="378"/>
    </location>
</feature>
<feature type="active site" evidence="1">
    <location>
        <position position="208"/>
    </location>
</feature>
<feature type="active site" evidence="1">
    <location>
        <position position="237"/>
    </location>
</feature>
<feature type="active site" description="Proton donor" evidence="1">
    <location>
        <position position="254"/>
    </location>
</feature>
<feature type="binding site" evidence="1">
    <location>
        <position position="45"/>
    </location>
    <ligand>
        <name>substrate</name>
    </ligand>
</feature>
<feature type="binding site" evidence="1">
    <location>
        <position position="66"/>
    </location>
    <ligand>
        <name>substrate</name>
    </ligand>
</feature>
<feature type="binding site" evidence="1">
    <location>
        <position position="146"/>
    </location>
    <ligand>
        <name>NAD(+)</name>
        <dbReference type="ChEBI" id="CHEBI:57540"/>
    </ligand>
</feature>
<feature type="binding site" evidence="1">
    <location>
        <position position="175"/>
    </location>
    <ligand>
        <name>NAD(+)</name>
        <dbReference type="ChEBI" id="CHEBI:57540"/>
    </ligand>
</feature>
<feature type="binding site" evidence="1">
    <location>
        <position position="232"/>
    </location>
    <ligand>
        <name>NAD(+)</name>
        <dbReference type="ChEBI" id="CHEBI:57540"/>
    </ligand>
</feature>
<feature type="binding site" evidence="1">
    <location>
        <position position="257"/>
    </location>
    <ligand>
        <name>NAD(+)</name>
        <dbReference type="ChEBI" id="CHEBI:57540"/>
    </ligand>
</feature>
<feature type="binding site" evidence="1">
    <location>
        <position position="258"/>
    </location>
    <ligand>
        <name>substrate</name>
    </ligand>
</feature>
<protein>
    <recommendedName>
        <fullName evidence="1">Erythronate-4-phosphate dehydrogenase</fullName>
        <ecNumber evidence="1">1.1.1.290</ecNumber>
    </recommendedName>
</protein>
<proteinExistence type="inferred from homology"/>